<gene>
    <name evidence="1 15" type="primary">cbbL</name>
    <name type="ordered locus">Hneap_0922</name>
</gene>
<sequence>MAVKKYSAGVKEYRQTYWMPEYTPLDSDILACFKITPQPGVDREEAAAAVAAESSTGTWTTVWTDLLTDMDYYKGRAYRIEDVPGDDAAFYAFIAYPIDLFEEGSVVNVFTSLVGNVFGFKAVRGLRLEDVRFPLAYVKTCGGPPHGIQVERDKMNKYGRPLLGCTIKPKLGLSAKNYGRAVYECLRGGLDFTKDDENINSQPFMRWRDRFLFVQDATETAEAQTGERKGHYLNVTAPTPEEMYKRAEFAKEIGAPIIMHDYITGGFTANTGLAKWCQDNGVLLHIHRAMHAVIDRNPNHGIHFRVLTKILRLSGGDHLHTGTVVGKLEGDRASTLGWIDLLRESFIPEDRSRGIFFDQDWGSMPGVFAVASGGIHVWHMPALVNIFGDDSVLQFGGGTLGHPWGNAAGAAANRVALEACVEARNQGRDIEKEGKEILTAAAQHSPELKIAMETWKEIKFEFDTVDKLDTQNR</sequence>
<dbReference type="EC" id="4.1.1.39" evidence="1 4"/>
<dbReference type="EMBL" id="AF038430">
    <property type="protein sequence ID" value="AAC32549.1"/>
    <property type="molecule type" value="Genomic_DNA"/>
</dbReference>
<dbReference type="EMBL" id="CP001801">
    <property type="protein sequence ID" value="ACX95765.1"/>
    <property type="molecule type" value="Genomic_DNA"/>
</dbReference>
<dbReference type="RefSeq" id="WP_012823801.1">
    <property type="nucleotide sequence ID" value="NC_013422.1"/>
</dbReference>
<dbReference type="PDB" id="1SVD">
    <property type="method" value="X-ray"/>
    <property type="resolution" value="1.80 A"/>
    <property type="chains" value="A=1-473"/>
</dbReference>
<dbReference type="PDB" id="6UEW">
    <property type="method" value="X-ray"/>
    <property type="resolution" value="2.40 A"/>
    <property type="chains" value="A/C/E/G=2-473"/>
</dbReference>
<dbReference type="PDB" id="7SMK">
    <property type="method" value="EM"/>
    <property type="resolution" value="1.98 A"/>
    <property type="chains" value="A=2-473"/>
</dbReference>
<dbReference type="PDB" id="7SNV">
    <property type="method" value="EM"/>
    <property type="resolution" value="2.07 A"/>
    <property type="chains" value="A=2-473"/>
</dbReference>
<dbReference type="PDB" id="7ZBT">
    <property type="method" value="EM"/>
    <property type="resolution" value="3.30 A"/>
    <property type="chains" value="A/B/C/D/E/F/G/H=1-473"/>
</dbReference>
<dbReference type="PDBsum" id="1SVD"/>
<dbReference type="PDBsum" id="6UEW"/>
<dbReference type="PDBsum" id="7SMK"/>
<dbReference type="PDBsum" id="7SNV"/>
<dbReference type="PDBsum" id="7ZBT"/>
<dbReference type="EMDB" id="EMD-14590"/>
<dbReference type="EMDB" id="EMD-25201"/>
<dbReference type="EMDB" id="EMD-25228"/>
<dbReference type="SMR" id="O85040"/>
<dbReference type="STRING" id="555778.Hneap_0922"/>
<dbReference type="KEGG" id="hna:Hneap_0922"/>
<dbReference type="eggNOG" id="COG1850">
    <property type="taxonomic scope" value="Bacteria"/>
</dbReference>
<dbReference type="HOGENOM" id="CLU_031450_2_0_6"/>
<dbReference type="OrthoDB" id="9770811at2"/>
<dbReference type="BRENDA" id="4.1.1.39">
    <property type="organism ID" value="6349"/>
</dbReference>
<dbReference type="EvolutionaryTrace" id="O85040"/>
<dbReference type="Proteomes" id="UP000009102">
    <property type="component" value="Chromosome"/>
</dbReference>
<dbReference type="GO" id="GO:0031470">
    <property type="term" value="C:carboxysome"/>
    <property type="evidence" value="ECO:0007669"/>
    <property type="project" value="UniProtKB-SubCell"/>
</dbReference>
<dbReference type="GO" id="GO:0000287">
    <property type="term" value="F:magnesium ion binding"/>
    <property type="evidence" value="ECO:0007669"/>
    <property type="project" value="UniProtKB-UniRule"/>
</dbReference>
<dbReference type="GO" id="GO:0004497">
    <property type="term" value="F:monooxygenase activity"/>
    <property type="evidence" value="ECO:0007669"/>
    <property type="project" value="UniProtKB-KW"/>
</dbReference>
<dbReference type="GO" id="GO:0016984">
    <property type="term" value="F:ribulose-bisphosphate carboxylase activity"/>
    <property type="evidence" value="ECO:0007669"/>
    <property type="project" value="UniProtKB-UniRule"/>
</dbReference>
<dbReference type="GO" id="GO:0019253">
    <property type="term" value="P:reductive pentose-phosphate cycle"/>
    <property type="evidence" value="ECO:0007669"/>
    <property type="project" value="UniProtKB-UniRule"/>
</dbReference>
<dbReference type="Gene3D" id="3.20.20.110">
    <property type="entry name" value="Ribulose bisphosphate carboxylase, large subunit, C-terminal domain"/>
    <property type="match status" value="1"/>
</dbReference>
<dbReference type="Gene3D" id="3.30.70.150">
    <property type="entry name" value="RuBisCO large subunit, N-terminal domain"/>
    <property type="match status" value="1"/>
</dbReference>
<dbReference type="HAMAP" id="MF_01338">
    <property type="entry name" value="RuBisCO_L_type1"/>
    <property type="match status" value="1"/>
</dbReference>
<dbReference type="InterPro" id="IPR033966">
    <property type="entry name" value="RuBisCO"/>
</dbReference>
<dbReference type="InterPro" id="IPR020878">
    <property type="entry name" value="RuBisCo_large_chain_AS"/>
</dbReference>
<dbReference type="InterPro" id="IPR000685">
    <property type="entry name" value="RuBisCO_lsu_C"/>
</dbReference>
<dbReference type="InterPro" id="IPR036376">
    <property type="entry name" value="RuBisCO_lsu_C_sf"/>
</dbReference>
<dbReference type="InterPro" id="IPR017443">
    <property type="entry name" value="RuBisCO_lsu_fd_N"/>
</dbReference>
<dbReference type="InterPro" id="IPR036422">
    <property type="entry name" value="RuBisCO_lsu_N_sf"/>
</dbReference>
<dbReference type="InterPro" id="IPR020888">
    <property type="entry name" value="RuBisCO_lsuI"/>
</dbReference>
<dbReference type="NCBIfam" id="NF003252">
    <property type="entry name" value="PRK04208.1"/>
    <property type="match status" value="1"/>
</dbReference>
<dbReference type="PANTHER" id="PTHR42704">
    <property type="entry name" value="RIBULOSE BISPHOSPHATE CARBOXYLASE"/>
    <property type="match status" value="1"/>
</dbReference>
<dbReference type="PANTHER" id="PTHR42704:SF17">
    <property type="entry name" value="RIBULOSE BISPHOSPHATE CARBOXYLASE LARGE CHAIN"/>
    <property type="match status" value="1"/>
</dbReference>
<dbReference type="Pfam" id="PF00016">
    <property type="entry name" value="RuBisCO_large"/>
    <property type="match status" value="1"/>
</dbReference>
<dbReference type="Pfam" id="PF02788">
    <property type="entry name" value="RuBisCO_large_N"/>
    <property type="match status" value="1"/>
</dbReference>
<dbReference type="SFLD" id="SFLDG01052">
    <property type="entry name" value="RuBisCO"/>
    <property type="match status" value="1"/>
</dbReference>
<dbReference type="SFLD" id="SFLDS00014">
    <property type="entry name" value="RuBisCO"/>
    <property type="match status" value="1"/>
</dbReference>
<dbReference type="SFLD" id="SFLDG00301">
    <property type="entry name" value="RuBisCO-like_proteins"/>
    <property type="match status" value="1"/>
</dbReference>
<dbReference type="SUPFAM" id="SSF51649">
    <property type="entry name" value="RuBisCo, C-terminal domain"/>
    <property type="match status" value="1"/>
</dbReference>
<dbReference type="SUPFAM" id="SSF54966">
    <property type="entry name" value="RuBisCO, large subunit, small (N-terminal) domain"/>
    <property type="match status" value="1"/>
</dbReference>
<dbReference type="PROSITE" id="PS00157">
    <property type="entry name" value="RUBISCO_LARGE"/>
    <property type="match status" value="1"/>
</dbReference>
<proteinExistence type="evidence at protein level"/>
<comment type="function">
    <text evidence="1 4 5 13 14">RuBisCO catalyzes two reactions: the carboxylation of D-ribulose 1,5-bisphosphate, the primary event in carbon dioxide fixation, as well as the oxidative fragmentation of the pentose substrate. Both reactions occur simultaneously and in competition at the same active site (By similarity) (PubMed:18258595, PubMed:18974784, Ref.3). There are estimated to be 270 RuBisCO heterohexadecamers per carboxysome (Ref.6).</text>
</comment>
<comment type="function">
    <text evidence="5">Alpha-carboxysomes are able to assemble in the absence of RuBisCO, unlike beta-carboxysomes. The RuBisCO large subunit is required for enzyme integration into carboxysomes; replacing it with the carboxysomally targeted gene (Tcr_0838, AC Q31HD9) of H.crungenus places RuBisCO in the carboxysome, while the non-carboxysomal large subunit of H.crungenus (Tcr_0427, AC Q31IK0) is not incorporated in the carboxysome.</text>
</comment>
<comment type="catalytic activity">
    <reaction evidence="1 4 5 13">
        <text>2 (2R)-3-phosphoglycerate + 2 H(+) = D-ribulose 1,5-bisphosphate + CO2 + H2O</text>
        <dbReference type="Rhea" id="RHEA:23124"/>
        <dbReference type="ChEBI" id="CHEBI:15377"/>
        <dbReference type="ChEBI" id="CHEBI:15378"/>
        <dbReference type="ChEBI" id="CHEBI:16526"/>
        <dbReference type="ChEBI" id="CHEBI:57870"/>
        <dbReference type="ChEBI" id="CHEBI:58272"/>
        <dbReference type="EC" id="4.1.1.39"/>
    </reaction>
</comment>
<comment type="catalytic activity">
    <reaction evidence="1 13">
        <text>D-ribulose 1,5-bisphosphate + O2 = 2-phosphoglycolate + (2R)-3-phosphoglycerate + 2 H(+)</text>
        <dbReference type="Rhea" id="RHEA:36631"/>
        <dbReference type="ChEBI" id="CHEBI:15378"/>
        <dbReference type="ChEBI" id="CHEBI:15379"/>
        <dbReference type="ChEBI" id="CHEBI:57870"/>
        <dbReference type="ChEBI" id="CHEBI:58033"/>
        <dbReference type="ChEBI" id="CHEBI:58272"/>
    </reaction>
</comment>
<comment type="cofactor">
    <cofactor evidence="1">
        <name>Mg(2+)</name>
        <dbReference type="ChEBI" id="CHEBI:18420"/>
    </cofactor>
    <text evidence="1">Binds 1 Mg(2+) ion per subunit.</text>
</comment>
<comment type="biophysicochemical properties">
    <kinetics>
        <KM>163.7 uM for CO(2)</KM>
        <Vmax evidence="4">2.9 umol/min/mg enzyme</Vmax>
        <text evidence="4">For enzyme freed from the carboxysome.</text>
    </kinetics>
</comment>
<comment type="subunit">
    <text evidence="1 8 10 12 17">Heterohexadecamer of 8 large chains and 8 small chains (By similarity) (Ref.14). Forms a CsoS2-CsoS1-RuBisCO complex (Probable). The N-terminus (residues 1-136) interacts with shell proteins CsoS1A, CsoS1B and CsoS1C (PubMed:30305640). Holo-RuBisCO interacts with the N-terminal repeats of CsoS2; binding is sensitive to ionic strength. A fusion of a single N-terminal repeat to the C-terminus of the large subunit of RuBisCO (cbbL) shows the repeat can lie between a CbbL dimer, making minor contacts to CbbS; thus each RuBisCO holoenzyme could bind 8 repeats (PubMed:32123388).</text>
</comment>
<comment type="subcellular location">
    <subcellularLocation>
        <location evidence="2 5 13 16">Carboxysome</location>
    </subcellularLocation>
    <text evidence="2 3 4 14">When the major carboxysomal shell protein CsoS1A is disrupted most RuBisCO is found in the soluble (cytoplasmic) fraction (PubMed:16535117). Most protein is found in the carboxysome interior and not associated with the shell (PubMed:14729686). This bacterium makes alpha-type carboxysomes (PubMed:18258595, Ref.6).</text>
</comment>
<comment type="induction">
    <text evidence="11">Produced when grown in air or in air supplemented with 5% CO(2) (at protein level). Part of the cbbL-cbbS operon.</text>
</comment>
<comment type="domain">
    <text evidence="8">The N-terminus (minimally 1-122, fragment 1-136 does not bind any better) interacts with the shell proteins CsoS1A, CsoS1B and CsoS1C. A slightly longer fragment of the N-terminus (residues 1-136) is required for targeting to carboxysomes, and will direct foreign proteins to the carboxysome, with reduced efficiency compared to the whole protein.</text>
</comment>
<comment type="disruption phenotype">
    <text evidence="5 9 11">Does not grow in air, grows poorly in air supplemented with 5% CO(2), a high-CO(2) requiring phenotype (hcr), has apolar effect on expression of downstream cbbS. Expresses type II but not type I RuBisCO, does not form carboxysomes but instead smaller, empty cytoplasmic inclusions (PubMed:9696760). A double ccbL-ccbS deletion is hcr and forms empty but otherwise normal appearing carboxysomes (PubMed:18974784). Required for growth in ambient air (PubMed:31406332).</text>
</comment>
<comment type="biotechnology">
    <text evidence="5 6 7 8">Expression of 10 genes for alpha-carboxysome (Cb) proteins (cbbL-cbbS-csoS2-csoS3-csoS4A-csoS4B-csoS1C-csoS1A-csoS1B-csoS1D) in E.coli generates compartments that resemble Cb, contain RuBisCO and have its catalytic activity, showing it is possible to make artificial, functional Cb using these 10 genes. Cargo proteins can be targeted to these organelles (PubMed:22184212, PubMed:30305640). Alpha-carboxysomes are assembled in the complete absence of this enzyme in this bacteria, suggesting carboxysome-based microcompartments can be designed for applications such as custom chemical reactors or delivery vehicles (PubMed:18974784). When this gene is expressed in S.elongatus PCC 7942 it colocalizes with its beta-carboxysomes, suggesting there a range of modular possibilites for the carboxysome constituent proteins. These experiments open the door to generating carboxysomes in plant cells to increase their photosynthesis and productivity, as well as tailoring bacterial microcompartments to specific metabolic needs and molecule delivery (PubMed:29922315).</text>
</comment>
<comment type="miscellaneous">
    <text evidence="1">The basic functional RuBisCO is composed of a large chain homodimer in a 'head-to-tail' conformation. In form I RuBisCO this homodimer is arranged in a barrel-like tetramer with the small subunits forming a tetrameric 'cap' on each end of the 'barrel'.</text>
</comment>
<comment type="similarity">
    <text evidence="1">Belongs to the RuBisCO large chain family. Type I subfamily.</text>
</comment>
<evidence type="ECO:0000255" key="1">
    <source>
        <dbReference type="HAMAP-Rule" id="MF_01338"/>
    </source>
</evidence>
<evidence type="ECO:0000269" key="2">
    <source>
    </source>
</evidence>
<evidence type="ECO:0000269" key="3">
    <source>
    </source>
</evidence>
<evidence type="ECO:0000269" key="4">
    <source>
    </source>
</evidence>
<evidence type="ECO:0000269" key="5">
    <source>
    </source>
</evidence>
<evidence type="ECO:0000269" key="6">
    <source>
    </source>
</evidence>
<evidence type="ECO:0000269" key="7">
    <source>
    </source>
</evidence>
<evidence type="ECO:0000269" key="8">
    <source>
    </source>
</evidence>
<evidence type="ECO:0000269" key="9">
    <source>
    </source>
</evidence>
<evidence type="ECO:0000269" key="10">
    <source>
    </source>
</evidence>
<evidence type="ECO:0000269" key="11">
    <source>
    </source>
</evidence>
<evidence type="ECO:0000269" key="12">
    <source ref="14"/>
</evidence>
<evidence type="ECO:0000269" key="13">
    <source ref="3"/>
</evidence>
<evidence type="ECO:0000269" key="14">
    <source ref="6"/>
</evidence>
<evidence type="ECO:0000303" key="15">
    <source>
    </source>
</evidence>
<evidence type="ECO:0000305" key="16">
    <source>
    </source>
</evidence>
<evidence type="ECO:0000305" key="17">
    <source>
    </source>
</evidence>
<evidence type="ECO:0007744" key="18">
    <source>
        <dbReference type="PDB" id="1SVD"/>
    </source>
</evidence>
<evidence type="ECO:0007744" key="19">
    <source>
        <dbReference type="PDB" id="6UEW"/>
    </source>
</evidence>
<evidence type="ECO:0007829" key="20">
    <source>
        <dbReference type="PDB" id="1SVD"/>
    </source>
</evidence>
<evidence type="ECO:0007829" key="21">
    <source>
        <dbReference type="PDB" id="7SMK"/>
    </source>
</evidence>
<accession>O85040</accession>
<accession>D0KZ92</accession>
<name>RBL1_HALNC</name>
<organism>
    <name type="scientific">Halothiobacillus neapolitanus (strain ATCC 23641 / c2)</name>
    <name type="common">Thiobacillus neapolitanus</name>
    <dbReference type="NCBI Taxonomy" id="555778"/>
    <lineage>
        <taxon>Bacteria</taxon>
        <taxon>Pseudomonadati</taxon>
        <taxon>Pseudomonadota</taxon>
        <taxon>Gammaproteobacteria</taxon>
        <taxon>Chromatiales</taxon>
        <taxon>Halothiobacillaceae</taxon>
        <taxon>Halothiobacillus</taxon>
    </lineage>
</organism>
<reference key="1">
    <citation type="journal article" date="1998" name="J. Bacteriol.">
        <title>Insertion mutation of the form I cbbL gene encoding ribulose bisphosphate carboxylase/oxygenase (RuBisCO) in Thiobacillus neapolitanus results in expression of form II RuBisCO, loss of carboxysomes, and an increased CO2 requirement for growth.</title>
        <authorList>
            <person name="Baker S.H."/>
            <person name="Jin S."/>
            <person name="Aldrich H.C."/>
            <person name="Howard G.T."/>
            <person name="Shively J.M."/>
        </authorList>
    </citation>
    <scope>NUCLEOTIDE SEQUENCE [GENOMIC DNA]</scope>
    <scope>INDUCTION</scope>
    <scope>DISRUPTION PHENOTYPE</scope>
    <source>
        <strain>ATCC 23641 / c2</strain>
    </source>
</reference>
<reference key="2">
    <citation type="submission" date="2009-10" db="EMBL/GenBank/DDBJ databases">
        <title>Complete sequence of Halothiobacillus neapolitanus c2.</title>
        <authorList>
            <consortium name="US DOE Joint Genome Institute"/>
            <person name="Lucas S."/>
            <person name="Copeland A."/>
            <person name="Lapidus A."/>
            <person name="Glavina del Rio T."/>
            <person name="Tice H."/>
            <person name="Bruce D."/>
            <person name="Goodwin L."/>
            <person name="Pitluck S."/>
            <person name="Davenport K."/>
            <person name="Brettin T."/>
            <person name="Detter J.C."/>
            <person name="Han C."/>
            <person name="Tapia R."/>
            <person name="Larimer F."/>
            <person name="Land M."/>
            <person name="Hauser L."/>
            <person name="Kyrpides N."/>
            <person name="Mikhailova N."/>
            <person name="Kerfeld C."/>
            <person name="Cannon G."/>
            <person name="Heinhort S."/>
        </authorList>
    </citation>
    <scope>NUCLEOTIDE SEQUENCE [LARGE SCALE GENOMIC DNA]</scope>
    <source>
        <strain>ATCC 23641 / c2</strain>
    </source>
</reference>
<reference key="3">
    <citation type="journal article" date="1983" name="Arch. Microbiol.">
        <title>Characterization of a Homogenous Preparation of Carboxysomes from Thiobacillus neapolitanus.</title>
        <authorList>
            <person name="Cannon G.C."/>
            <person name="Shively J.M."/>
        </authorList>
    </citation>
    <scope>FUNCTION</scope>
    <scope>CATALYTIC ACTIVITY</scope>
    <scope>SUBCELLULAR LOCATION</scope>
</reference>
<reference key="4">
    <citation type="journal article" date="1995" name="Appl. Environ. Microbiol.">
        <title>Use of Electroporation To Generate a Thiobacillus neapolitanus Carboxysome Mutant.</title>
        <authorList>
            <person name="English R.S."/>
            <person name="Jin S."/>
            <person name="Shively J.M."/>
        </authorList>
    </citation>
    <scope>SUBCELLULAR LOCATION</scope>
</reference>
<reference key="5">
    <citation type="journal article" date="2004" name="J. Bacteriol.">
        <title>A novel evolutionary lineage of carbonic anhydrase (epsilon class) is a component of the carboxysome shell.</title>
        <authorList>
            <person name="So A.K."/>
            <person name="Espie G.S."/>
            <person name="Williams E.B."/>
            <person name="Shively J.M."/>
            <person name="Heinhorst S."/>
            <person name="Cannon G.C."/>
        </authorList>
    </citation>
    <scope>SUBCELLULAR LOCATION</scope>
</reference>
<reference key="6">
    <citation type="book" date="2006" name="Microbiology Monographs">
        <title>Carboxysomes and Carboxysome-like Inclusions.</title>
        <editorList>
            <person name="Shively J.M."/>
        </editorList>
        <authorList>
            <person name="Heinhorst S."/>
            <person name="Cannon G.C."/>
            <person name="Shively J.M."/>
        </authorList>
    </citation>
    <scope>PROTEIN ABUNDANCE</scope>
    <scope>SUBCELLULAR LOCATION</scope>
</reference>
<reference key="7">
    <citation type="journal article" date="2008" name="J. Biol. Chem.">
        <title>CO2 fixation kinetics of Halothiobacillus neapolitanus mutant carboxysomes lacking carbonic anhydrase suggest the shell acts as a diffusional barrier for CO2.</title>
        <authorList>
            <person name="Dou Z."/>
            <person name="Heinhorst S."/>
            <person name="Williams E.B."/>
            <person name="Murin C.D."/>
            <person name="Shively J.M."/>
            <person name="Cannon G.C."/>
        </authorList>
    </citation>
    <scope>FUNCTION</scope>
    <scope>CATALYTIC ACTIVITY</scope>
    <scope>BIOPHYSICOCHEMICAL PROPERTIES</scope>
    <scope>SUBCELLULAR LOCATION</scope>
    <source>
        <strain>ATCC 23641 / c2</strain>
    </source>
</reference>
<reference key="8">
    <citation type="journal article" date="2008" name="PLoS ONE">
        <title>Halothiobacillus neapolitanus carboxysomes sequester heterologous and chimeric RubisCO species.</title>
        <authorList>
            <person name="Menon B.B."/>
            <person name="Dou Z."/>
            <person name="Heinhorst S."/>
            <person name="Shively J.M."/>
            <person name="Cannon G.C."/>
        </authorList>
    </citation>
    <scope>FUNCTION</scope>
    <scope>SUBCELLULAR LOCATION</scope>
    <scope>CARBOXYSOME ASSEMBLY PROCESS</scope>
    <scope>REQUIRED FOR CARBOXYSOMAL TARGETING</scope>
    <scope>DISRUPTION PHENOTYPE</scope>
    <scope>BIOTECHNOLOGY</scope>
    <source>
        <strain>ATCC 23641 / c2</strain>
    </source>
</reference>
<reference key="9">
    <citation type="journal article" date="2012" name="Proc. Natl. Acad. Sci. U.S.A.">
        <title>Modularity of a carbon-fixing protein organelle.</title>
        <authorList>
            <person name="Bonacci W."/>
            <person name="Teng P.K."/>
            <person name="Afonso B."/>
            <person name="Niederholtmeyer H."/>
            <person name="Grob P."/>
            <person name="Silver P.A."/>
            <person name="Savage D.F."/>
        </authorList>
    </citation>
    <scope>BIOTECHNOLOGY</scope>
    <source>
        <strain>ATCC 23641 / c2</strain>
    </source>
</reference>
<reference key="10">
    <citation type="journal article" date="2015" name="Life">
        <title>Advances in Understanding Carboxysome Assembly in Prochlorococcus and Synechococcus Implicate CsoS2 as a Critical Component.</title>
        <authorList>
            <person name="Cai F."/>
            <person name="Dou Z."/>
            <person name="Bernstein S.L."/>
            <person name="Leverenz R."/>
            <person name="Williams E.B."/>
            <person name="Heinhorst S."/>
            <person name="Shively J."/>
            <person name="Cannon G.C."/>
            <person name="Kerfeld C.A."/>
        </authorList>
    </citation>
    <scope>SUBUNIT</scope>
    <source>
        <strain>ATCC 23641 / c2</strain>
    </source>
</reference>
<reference key="11">
    <citation type="journal article" date="2018" name="Front. Plant Sci.">
        <title>Engineering and Modulating Functional Cyanobacterial CO2-Fixing Organelles.</title>
        <authorList>
            <person name="Fang Y."/>
            <person name="Huang F."/>
            <person name="Faulkner M."/>
            <person name="Jiang Q."/>
            <person name="Dykes G.F."/>
            <person name="Yang M."/>
            <person name="Liu L.N."/>
        </authorList>
    </citation>
    <scope>BIOTECHNOLOGY</scope>
</reference>
<reference key="12">
    <citation type="journal article" date="2018" name="Sci. Rep.">
        <title>Deciphering molecular details in the assembly of alpha-type carboxysome.</title>
        <authorList>
            <person name="Liu Y."/>
            <person name="He X."/>
            <person name="Lim W."/>
            <person name="Mueller J."/>
            <person name="Lawrie J."/>
            <person name="Kramer L."/>
            <person name="Guo J."/>
            <person name="Niu W."/>
        </authorList>
    </citation>
    <scope>INTERACTION WITH CSOS1A; CSOS1B AND CSOS1C</scope>
    <scope>DOMAIN</scope>
    <scope>BIOTECHNOLOGY</scope>
    <source>
        <strain>ATCC 23641 / c2</strain>
    </source>
</reference>
<reference key="13">
    <citation type="journal article" date="2019" name="Nat. Microbiol.">
        <title>DABs are inorganic carbon pumps found throughout prokaryotic phyla.</title>
        <authorList>
            <person name="Desmarais J.J."/>
            <person name="Flamholz A.I."/>
            <person name="Blikstad C."/>
            <person name="Dugan E.J."/>
            <person name="Laughlin T.G."/>
            <person name="Oltrogge L.M."/>
            <person name="Chen A.W."/>
            <person name="Wetmore K."/>
            <person name="Diamond S."/>
            <person name="Wang J.Y."/>
            <person name="Savage D.F."/>
        </authorList>
    </citation>
    <scope>DISRUPTION PHENOTYPE</scope>
    <source>
        <strain>ATCC 23641 / c2</strain>
    </source>
</reference>
<reference evidence="18" key="14">
    <citation type="submission" date="2005-04" db="PDB data bank">
        <title>The structure of Halothiobacillus neapolitanus Rubisco.</title>
        <authorList>
            <person name="Kerfeld C.A."/>
            <person name="Sawaya M.R."/>
            <person name="Pashkov I."/>
            <person name="Cannon G."/>
            <person name="Williams E."/>
            <person name="Tran K."/>
            <person name="Yeates T.O."/>
        </authorList>
    </citation>
    <scope>X-RAY CRYSTALLOGRAPHY (1.8 ANGSTROMS)</scope>
</reference>
<reference evidence="19" key="15">
    <citation type="journal article" date="2020" name="Nat. Struct. Mol. Biol.">
        <title>Multivalent interactions between CsoS2 and Rubisco mediate alpha-carboxysome formation.</title>
        <authorList>
            <person name="Oltrogge L.M."/>
            <person name="Chaijarasphong T."/>
            <person name="Chen A.W."/>
            <person name="Bolin E.R."/>
            <person name="Marqusee S."/>
            <person name="Savage D.F."/>
        </authorList>
    </citation>
    <scope>X-RAY CRYSTALLOGRAPHY (2.40 ANGSTROMS) OF HOLOENZYME</scope>
    <scope>INTERACTION WITH CSOS2</scope>
    <scope>MUTAGENESIS OF TYR-72 AND PHE-346</scope>
</reference>
<protein>
    <recommendedName>
        <fullName evidence="1">Ribulose bisphosphate carboxylase large chain</fullName>
        <shortName evidence="1">RuBisCO large subunit</shortName>
        <ecNumber evidence="1 4">4.1.1.39</ecNumber>
    </recommendedName>
    <alternativeName>
        <fullName evidence="15">Form 1 RuBisCO</fullName>
    </alternativeName>
</protein>
<feature type="chain" id="PRO_0000062660" description="Ribulose bisphosphate carboxylase large chain">
    <location>
        <begin position="1"/>
        <end position="473"/>
    </location>
</feature>
<feature type="region of interest" description="Necessary and sufficient to target proteins to carboxysomes, interacts with shell proteins" evidence="8">
    <location>
        <begin position="1"/>
        <end position="136"/>
    </location>
</feature>
<feature type="active site" description="Proton acceptor" evidence="1">
    <location>
        <position position="168"/>
    </location>
</feature>
<feature type="active site" description="Proton acceptor" evidence="1">
    <location>
        <position position="287"/>
    </location>
</feature>
<feature type="binding site" description="in homodimeric partner" evidence="1">
    <location>
        <position position="116"/>
    </location>
    <ligand>
        <name>substrate</name>
    </ligand>
</feature>
<feature type="binding site" evidence="1">
    <location>
        <position position="166"/>
    </location>
    <ligand>
        <name>substrate</name>
    </ligand>
</feature>
<feature type="binding site" evidence="1">
    <location>
        <position position="170"/>
    </location>
    <ligand>
        <name>substrate</name>
    </ligand>
</feature>
<feature type="binding site" description="via carbamate group" evidence="1">
    <location>
        <position position="194"/>
    </location>
    <ligand>
        <name>Mg(2+)</name>
        <dbReference type="ChEBI" id="CHEBI:18420"/>
    </ligand>
</feature>
<feature type="binding site" evidence="1">
    <location>
        <position position="196"/>
    </location>
    <ligand>
        <name>Mg(2+)</name>
        <dbReference type="ChEBI" id="CHEBI:18420"/>
    </ligand>
</feature>
<feature type="binding site" evidence="1">
    <location>
        <position position="197"/>
    </location>
    <ligand>
        <name>Mg(2+)</name>
        <dbReference type="ChEBI" id="CHEBI:18420"/>
    </ligand>
</feature>
<feature type="binding site" evidence="1">
    <location>
        <position position="288"/>
    </location>
    <ligand>
        <name>substrate</name>
    </ligand>
</feature>
<feature type="binding site" evidence="1">
    <location>
        <position position="320"/>
    </location>
    <ligand>
        <name>substrate</name>
    </ligand>
</feature>
<feature type="binding site" evidence="1">
    <location>
        <position position="372"/>
    </location>
    <ligand>
        <name>substrate</name>
    </ligand>
</feature>
<feature type="site" description="Transition state stabilizer" evidence="1">
    <location>
        <position position="327"/>
    </location>
</feature>
<feature type="modified residue" description="N6-carboxylysine" evidence="1">
    <location>
        <position position="194"/>
    </location>
</feature>
<feature type="mutagenesis site" description="No longer binds N-repeats in CsoS2A; when associated with A-346 and 'A-96' in CbbS." evidence="10">
    <original>Y</original>
    <variation>A</variation>
    <location>
        <position position="72"/>
    </location>
</feature>
<feature type="mutagenesis site" description="No longer binds N-repeats in CsoS2A." evidence="10">
    <original>Y</original>
    <variation>R</variation>
    <location>
        <position position="72"/>
    </location>
</feature>
<feature type="mutagenesis site" description="No longer binds N-repeats in CsoS2A; when associated with A-72 and 'A-96' in CbbS." evidence="10">
    <original>F</original>
    <variation>A</variation>
    <location>
        <position position="346"/>
    </location>
</feature>
<feature type="helix" evidence="21">
    <location>
        <begin position="14"/>
        <end position="17"/>
    </location>
</feature>
<feature type="strand" evidence="20">
    <location>
        <begin position="28"/>
        <end position="37"/>
    </location>
</feature>
<feature type="helix" evidence="20">
    <location>
        <begin position="43"/>
        <end position="53"/>
    </location>
</feature>
<feature type="turn" evidence="20">
    <location>
        <begin position="54"/>
        <end position="56"/>
    </location>
</feature>
<feature type="strand" evidence="21">
    <location>
        <begin position="59"/>
        <end position="61"/>
    </location>
</feature>
<feature type="helix" evidence="20">
    <location>
        <begin position="63"/>
        <end position="67"/>
    </location>
</feature>
<feature type="turn" evidence="20">
    <location>
        <begin position="70"/>
        <end position="72"/>
    </location>
</feature>
<feature type="strand" evidence="20">
    <location>
        <begin position="76"/>
        <end position="83"/>
    </location>
</feature>
<feature type="strand" evidence="20">
    <location>
        <begin position="86"/>
        <end position="96"/>
    </location>
</feature>
<feature type="helix" evidence="20">
    <location>
        <begin position="98"/>
        <end position="100"/>
    </location>
</feature>
<feature type="helix" evidence="20">
    <location>
        <begin position="106"/>
        <end position="114"/>
    </location>
</feature>
<feature type="helix" evidence="20">
    <location>
        <begin position="117"/>
        <end position="119"/>
    </location>
</feature>
<feature type="strand" evidence="20">
    <location>
        <begin position="123"/>
        <end position="132"/>
    </location>
</feature>
<feature type="helix" evidence="20">
    <location>
        <begin position="135"/>
        <end position="138"/>
    </location>
</feature>
<feature type="helix" evidence="20">
    <location>
        <begin position="148"/>
        <end position="155"/>
    </location>
</feature>
<feature type="strand" evidence="20">
    <location>
        <begin position="162"/>
        <end position="166"/>
    </location>
</feature>
<feature type="strand" evidence="20">
    <location>
        <begin position="170"/>
        <end position="172"/>
    </location>
</feature>
<feature type="helix" evidence="20">
    <location>
        <begin position="175"/>
        <end position="187"/>
    </location>
</feature>
<feature type="strand" evidence="20">
    <location>
        <begin position="191"/>
        <end position="194"/>
    </location>
</feature>
<feature type="strand" evidence="20">
    <location>
        <begin position="200"/>
        <end position="202"/>
    </location>
</feature>
<feature type="helix" evidence="20">
    <location>
        <begin position="207"/>
        <end position="225"/>
    </location>
</feature>
<feature type="strand" evidence="20">
    <location>
        <begin position="230"/>
        <end position="234"/>
    </location>
</feature>
<feature type="helix" evidence="20">
    <location>
        <begin position="240"/>
        <end position="253"/>
    </location>
</feature>
<feature type="strand" evidence="20">
    <location>
        <begin position="257"/>
        <end position="261"/>
    </location>
</feature>
<feature type="turn" evidence="20">
    <location>
        <begin position="262"/>
        <end position="265"/>
    </location>
</feature>
<feature type="helix" evidence="20">
    <location>
        <begin position="267"/>
        <end position="280"/>
    </location>
</feature>
<feature type="strand" evidence="20">
    <location>
        <begin position="283"/>
        <end position="287"/>
    </location>
</feature>
<feature type="helix" evidence="20">
    <location>
        <begin position="291"/>
        <end position="295"/>
    </location>
</feature>
<feature type="strand" evidence="20">
    <location>
        <begin position="300"/>
        <end position="302"/>
    </location>
</feature>
<feature type="helix" evidence="20">
    <location>
        <begin position="304"/>
        <end position="314"/>
    </location>
</feature>
<feature type="strand" evidence="20">
    <location>
        <begin position="317"/>
        <end position="320"/>
    </location>
</feature>
<feature type="turn" evidence="21">
    <location>
        <begin position="324"/>
        <end position="326"/>
    </location>
</feature>
<feature type="helix" evidence="20">
    <location>
        <begin position="329"/>
        <end position="331"/>
    </location>
</feature>
<feature type="helix" evidence="20">
    <location>
        <begin position="333"/>
        <end position="343"/>
    </location>
</feature>
<feature type="strand" evidence="20">
    <location>
        <begin position="345"/>
        <end position="347"/>
    </location>
</feature>
<feature type="helix" evidence="20">
    <location>
        <begin position="351"/>
        <end position="353"/>
    </location>
</feature>
<feature type="strand" evidence="20">
    <location>
        <begin position="368"/>
        <end position="374"/>
    </location>
</feature>
<feature type="helix" evidence="20">
    <location>
        <begin position="377"/>
        <end position="379"/>
    </location>
</feature>
<feature type="helix" evidence="20">
    <location>
        <begin position="380"/>
        <end position="387"/>
    </location>
</feature>
<feature type="strand" evidence="20">
    <location>
        <begin position="389"/>
        <end position="394"/>
    </location>
</feature>
<feature type="helix" evidence="20">
    <location>
        <begin position="397"/>
        <end position="400"/>
    </location>
</feature>
<feature type="helix" evidence="20">
    <location>
        <begin position="406"/>
        <end position="425"/>
    </location>
</feature>
<feature type="turn" evidence="20">
    <location>
        <begin position="430"/>
        <end position="433"/>
    </location>
</feature>
<feature type="helix" evidence="20">
    <location>
        <begin position="434"/>
        <end position="442"/>
    </location>
</feature>
<feature type="helix" evidence="20">
    <location>
        <begin position="446"/>
        <end position="455"/>
    </location>
</feature>
<keyword id="KW-0002">3D-structure</keyword>
<keyword id="KW-1283">Bacterial microcompartment</keyword>
<keyword id="KW-0113">Calvin cycle</keyword>
<keyword id="KW-0120">Carbon dioxide fixation</keyword>
<keyword id="KW-1282">Carboxysome</keyword>
<keyword id="KW-0456">Lyase</keyword>
<keyword id="KW-0460">Magnesium</keyword>
<keyword id="KW-0479">Metal-binding</keyword>
<keyword id="KW-0503">Monooxygenase</keyword>
<keyword id="KW-0560">Oxidoreductase</keyword>
<keyword id="KW-1185">Reference proteome</keyword>